<keyword id="KW-0053">Apoptosis</keyword>
<keyword id="KW-1035">Host cytoplasm</keyword>
<keyword id="KW-1043">Host membrane</keyword>
<keyword id="KW-1045">Host mitochondrion</keyword>
<keyword id="KW-1046">Host mitochondrion inner membrane</keyword>
<keyword id="KW-1048">Host nucleus</keyword>
<keyword id="KW-0945">Host-virus interaction</keyword>
<keyword id="KW-1090">Inhibition of host innate immune response by virus</keyword>
<keyword id="KW-1097">Inhibition of host MAVS by virus</keyword>
<keyword id="KW-1113">Inhibition of host RLR pathway by virus</keyword>
<keyword id="KW-0472">Membrane</keyword>
<keyword id="KW-1119">Modulation of host cell apoptosis by virus</keyword>
<keyword id="KW-0899">Viral immunoevasion</keyword>
<feature type="chain" id="PRO_0000311643" description="Protein PB1-F2">
    <location>
        <begin position="1"/>
        <end position="90"/>
    </location>
</feature>
<feature type="region of interest" description="Disordered" evidence="2">
    <location>
        <begin position="1"/>
        <end position="34"/>
    </location>
</feature>
<feature type="region of interest" description="Mitochondrial targeting sequence" evidence="1">
    <location>
        <begin position="65"/>
        <end position="87"/>
    </location>
</feature>
<feature type="compositionally biased region" description="Polar residues" evidence="2">
    <location>
        <begin position="1"/>
        <end position="28"/>
    </location>
</feature>
<feature type="site" description="Low pathogenicity" evidence="1">
    <location>
        <position position="66"/>
    </location>
</feature>
<sequence>MEQEQDTPWTRSIEHINTQRRGNGQQTPKLEHPNSIQLMDHYPRITSRADMHKQIVCWKQWLSSKNPTQGSLKTHVLKRWKLFSKQEWTN</sequence>
<organismHost>
    <name type="scientific">Aves</name>
    <dbReference type="NCBI Taxonomy" id="8782"/>
</organismHost>
<organismHost>
    <name type="scientific">Felis catus</name>
    <name type="common">Cat</name>
    <name type="synonym">Felis silvestris catus</name>
    <dbReference type="NCBI Taxonomy" id="9685"/>
</organismHost>
<organismHost>
    <name type="scientific">Homo sapiens</name>
    <name type="common">Human</name>
    <dbReference type="NCBI Taxonomy" id="9606"/>
</organismHost>
<organismHost>
    <name type="scientific">Panthera pardus</name>
    <name type="common">Leopard</name>
    <name type="synonym">Felis pardus</name>
    <dbReference type="NCBI Taxonomy" id="9691"/>
</organismHost>
<organismHost>
    <name type="scientific">Panthera tigris</name>
    <name type="common">Tiger</name>
    <dbReference type="NCBI Taxonomy" id="9694"/>
</organismHost>
<organismHost>
    <name type="scientific">Sus scrofa</name>
    <name type="common">Pig</name>
    <dbReference type="NCBI Taxonomy" id="9823"/>
</organismHost>
<dbReference type="EMBL" id="AY651678">
    <property type="status" value="NOT_ANNOTATED_CDS"/>
    <property type="molecule type" value="Genomic_RNA"/>
</dbReference>
<dbReference type="SMR" id="P0C5V2"/>
<dbReference type="GO" id="GO:0044164">
    <property type="term" value="C:host cell cytosol"/>
    <property type="evidence" value="ECO:0007669"/>
    <property type="project" value="UniProtKB-SubCell"/>
</dbReference>
<dbReference type="GO" id="GO:0044192">
    <property type="term" value="C:host cell mitochondrial inner membrane"/>
    <property type="evidence" value="ECO:0007669"/>
    <property type="project" value="UniProtKB-SubCell"/>
</dbReference>
<dbReference type="GO" id="GO:0042025">
    <property type="term" value="C:host cell nucleus"/>
    <property type="evidence" value="ECO:0007669"/>
    <property type="project" value="UniProtKB-SubCell"/>
</dbReference>
<dbReference type="GO" id="GO:0016020">
    <property type="term" value="C:membrane"/>
    <property type="evidence" value="ECO:0007669"/>
    <property type="project" value="UniProtKB-UniRule"/>
</dbReference>
<dbReference type="GO" id="GO:0052150">
    <property type="term" value="P:symbiont-mediated perturbation of host apoptosis"/>
    <property type="evidence" value="ECO:0007669"/>
    <property type="project" value="UniProtKB-KW"/>
</dbReference>
<dbReference type="GO" id="GO:0039545">
    <property type="term" value="P:symbiont-mediated suppression of host cytoplasmic pattern recognition receptor signaling pathway via inhibition of MAVS activity"/>
    <property type="evidence" value="ECO:0007669"/>
    <property type="project" value="UniProtKB-KW"/>
</dbReference>
<dbReference type="HAMAP" id="MF_04064">
    <property type="entry name" value="INFV_PB1F2"/>
    <property type="match status" value="1"/>
</dbReference>
<dbReference type="InterPro" id="IPR021045">
    <property type="entry name" value="Flu_proapoptotic_PB1-F2"/>
</dbReference>
<dbReference type="Pfam" id="PF11986">
    <property type="entry name" value="PB1-F2"/>
    <property type="match status" value="1"/>
</dbReference>
<accession>P0C5V2</accession>
<gene>
    <name evidence="1" type="primary">PB1</name>
</gene>
<name>PB1F2_I02A3</name>
<reference key="1">
    <citation type="journal article" date="2004" name="Nature">
        <title>Genesis of a highly pathogenic and potentially pandemic H5N1 influenza virus in eastern Asia.</title>
        <authorList>
            <person name="Li K.S."/>
            <person name="Guan Y."/>
            <person name="Wang J."/>
            <person name="Smith G.J.D."/>
            <person name="Xu K.M."/>
            <person name="Duan L."/>
            <person name="Rahardjo A.P."/>
            <person name="Puthavathana P."/>
            <person name="Buranathai C."/>
            <person name="Nguyen T.D."/>
            <person name="Estoepangestie A.T.S."/>
            <person name="Chaisingh A."/>
            <person name="Auewarakul P."/>
            <person name="Long H.T."/>
            <person name="Hanh N.T.H."/>
            <person name="Webby R.J."/>
            <person name="Poon L.L.M."/>
            <person name="Chen H."/>
            <person name="Shortridge K.F."/>
            <person name="Yuen K.Y."/>
            <person name="Webster R.G."/>
            <person name="Peiris J.S.M."/>
        </authorList>
    </citation>
    <scope>NUCLEOTIDE SEQUENCE [GENOMIC RNA]</scope>
</reference>
<comment type="function">
    <text evidence="1">Plays an important role in promoting lung pathology in both primary viral infection and secondary bacterial infection. Promotes alteration of mitochondrial morphology, dissipation of mitochondrial membrane potential, and cell death. Alternatively, inhibits the production of interferon in the infected cell at the level of host mitochondrial antiviral signaling MAVS. Its level of expression differs greatly depending on which cell type is infected, in a manner that is independent of the levels of expression of other viral proteins. Monocytic cells are more affected than epithelial cells. Seems to disable virus-infected monocytes or other host innate immune cells. During early stage of infection, predisposes the mitochondria to permeability transition through interaction with host SLC25A6/ANT3 and VDAC1. These proteins participate in the formation of the permeability transition pore complex (PTPC) responsible of the release of mitochondrial products that triggers apoptosis.</text>
</comment>
<comment type="subunit">
    <text evidence="1">Oligomer. Interacts with human SLC25A6/ANT3 and VDAC1. Interacts with host MAVS.</text>
</comment>
<comment type="subcellular location">
    <subcellularLocation>
        <location evidence="1">Host mitochondrion inner membrane</location>
    </subcellularLocation>
    <subcellularLocation>
        <location evidence="1">Host nucleus</location>
    </subcellularLocation>
    <subcellularLocation>
        <location evidence="1">Host cytoplasm</location>
        <location evidence="1">Host cytosol</location>
    </subcellularLocation>
    <text evidence="1">Inner mitochondrial membrane in most cells types. Otherwise is detected in the nucleus and cytosol.</text>
</comment>
<comment type="miscellaneous">
    <text>Is not encoded in all strains, and seems to be dispensable for replication.</text>
</comment>
<comment type="similarity">
    <text evidence="1">Belongs to the influenza viruses PB1-F2 family.</text>
</comment>
<protein>
    <recommendedName>
        <fullName evidence="1">Protein PB1-F2</fullName>
    </recommendedName>
</protein>
<proteinExistence type="inferred from homology"/>
<organism>
    <name type="scientific">Influenza A virus (strain A/Chicken/Hong Kong/37.4/2002 H5N1 genotype X2)</name>
    <dbReference type="NCBI Taxonomy" id="284172"/>
    <lineage>
        <taxon>Viruses</taxon>
        <taxon>Riboviria</taxon>
        <taxon>Orthornavirae</taxon>
        <taxon>Negarnaviricota</taxon>
        <taxon>Polyploviricotina</taxon>
        <taxon>Insthoviricetes</taxon>
        <taxon>Articulavirales</taxon>
        <taxon>Orthomyxoviridae</taxon>
        <taxon>Alphainfluenzavirus</taxon>
        <taxon>Alphainfluenzavirus influenzae</taxon>
        <taxon>Influenza A virus</taxon>
    </lineage>
</organism>
<evidence type="ECO:0000255" key="1">
    <source>
        <dbReference type="HAMAP-Rule" id="MF_04064"/>
    </source>
</evidence>
<evidence type="ECO:0000256" key="2">
    <source>
        <dbReference type="SAM" id="MobiDB-lite"/>
    </source>
</evidence>